<protein>
    <recommendedName>
        <fullName evidence="1">Leucine--tRNA ligase</fullName>
        <ecNumber evidence="1">6.1.1.4</ecNumber>
    </recommendedName>
    <alternativeName>
        <fullName evidence="1">Leucyl-tRNA synthetase</fullName>
        <shortName evidence="1">LeuRS</shortName>
    </alternativeName>
</protein>
<comment type="catalytic activity">
    <reaction evidence="1">
        <text>tRNA(Leu) + L-leucine + ATP = L-leucyl-tRNA(Leu) + AMP + diphosphate</text>
        <dbReference type="Rhea" id="RHEA:11688"/>
        <dbReference type="Rhea" id="RHEA-COMP:9613"/>
        <dbReference type="Rhea" id="RHEA-COMP:9622"/>
        <dbReference type="ChEBI" id="CHEBI:30616"/>
        <dbReference type="ChEBI" id="CHEBI:33019"/>
        <dbReference type="ChEBI" id="CHEBI:57427"/>
        <dbReference type="ChEBI" id="CHEBI:78442"/>
        <dbReference type="ChEBI" id="CHEBI:78494"/>
        <dbReference type="ChEBI" id="CHEBI:456215"/>
        <dbReference type="EC" id="6.1.1.4"/>
    </reaction>
</comment>
<comment type="subcellular location">
    <subcellularLocation>
        <location evidence="1">Cytoplasm</location>
    </subcellularLocation>
</comment>
<comment type="similarity">
    <text evidence="1">Belongs to the class-I aminoacyl-tRNA synthetase family.</text>
</comment>
<keyword id="KW-0030">Aminoacyl-tRNA synthetase</keyword>
<keyword id="KW-0067">ATP-binding</keyword>
<keyword id="KW-0963">Cytoplasm</keyword>
<keyword id="KW-0436">Ligase</keyword>
<keyword id="KW-0547">Nucleotide-binding</keyword>
<keyword id="KW-0648">Protein biosynthesis</keyword>
<name>SYL_CHLPM</name>
<organism>
    <name type="scientific">Chlorobium phaeovibrioides (strain DSM 265 / 1930)</name>
    <name type="common">Prosthecochloris vibrioformis (strain DSM 265)</name>
    <dbReference type="NCBI Taxonomy" id="290318"/>
    <lineage>
        <taxon>Bacteria</taxon>
        <taxon>Pseudomonadati</taxon>
        <taxon>Chlorobiota</taxon>
        <taxon>Chlorobiia</taxon>
        <taxon>Chlorobiales</taxon>
        <taxon>Chlorobiaceae</taxon>
        <taxon>Chlorobium/Pelodictyon group</taxon>
        <taxon>Chlorobium</taxon>
    </lineage>
</organism>
<gene>
    <name evidence="1" type="primary">leuS</name>
    <name type="ordered locus">Cvib_1425</name>
</gene>
<reference key="1">
    <citation type="submission" date="2007-03" db="EMBL/GenBank/DDBJ databases">
        <title>Complete sequence of Prosthecochloris vibrioformis DSM 265.</title>
        <authorList>
            <consortium name="US DOE Joint Genome Institute"/>
            <person name="Copeland A."/>
            <person name="Lucas S."/>
            <person name="Lapidus A."/>
            <person name="Barry K."/>
            <person name="Detter J.C."/>
            <person name="Glavina del Rio T."/>
            <person name="Hammon N."/>
            <person name="Israni S."/>
            <person name="Pitluck S."/>
            <person name="Schmutz J."/>
            <person name="Larimer F."/>
            <person name="Land M."/>
            <person name="Hauser L."/>
            <person name="Mikhailova N."/>
            <person name="Li T."/>
            <person name="Overmann J."/>
            <person name="Schuster S.C."/>
            <person name="Bryant D.A."/>
            <person name="Richardson P."/>
        </authorList>
    </citation>
    <scope>NUCLEOTIDE SEQUENCE [LARGE SCALE GENOMIC DNA]</scope>
    <source>
        <strain>DSM 265 / 1930</strain>
    </source>
</reference>
<proteinExistence type="inferred from homology"/>
<accession>A4SG27</accession>
<evidence type="ECO:0000255" key="1">
    <source>
        <dbReference type="HAMAP-Rule" id="MF_00049"/>
    </source>
</evidence>
<dbReference type="EC" id="6.1.1.4" evidence="1"/>
<dbReference type="EMBL" id="CP000607">
    <property type="protein sequence ID" value="ABP37436.1"/>
    <property type="molecule type" value="Genomic_DNA"/>
</dbReference>
<dbReference type="SMR" id="A4SG27"/>
<dbReference type="STRING" id="290318.Cvib_1425"/>
<dbReference type="KEGG" id="pvi:Cvib_1425"/>
<dbReference type="eggNOG" id="COG0495">
    <property type="taxonomic scope" value="Bacteria"/>
</dbReference>
<dbReference type="HOGENOM" id="CLU_004427_0_0_10"/>
<dbReference type="OrthoDB" id="9810365at2"/>
<dbReference type="GO" id="GO:0005829">
    <property type="term" value="C:cytosol"/>
    <property type="evidence" value="ECO:0007669"/>
    <property type="project" value="TreeGrafter"/>
</dbReference>
<dbReference type="GO" id="GO:0002161">
    <property type="term" value="F:aminoacyl-tRNA deacylase activity"/>
    <property type="evidence" value="ECO:0007669"/>
    <property type="project" value="InterPro"/>
</dbReference>
<dbReference type="GO" id="GO:0005524">
    <property type="term" value="F:ATP binding"/>
    <property type="evidence" value="ECO:0007669"/>
    <property type="project" value="UniProtKB-UniRule"/>
</dbReference>
<dbReference type="GO" id="GO:0004823">
    <property type="term" value="F:leucine-tRNA ligase activity"/>
    <property type="evidence" value="ECO:0007669"/>
    <property type="project" value="UniProtKB-UniRule"/>
</dbReference>
<dbReference type="GO" id="GO:0006429">
    <property type="term" value="P:leucyl-tRNA aminoacylation"/>
    <property type="evidence" value="ECO:0007669"/>
    <property type="project" value="UniProtKB-UniRule"/>
</dbReference>
<dbReference type="CDD" id="cd07958">
    <property type="entry name" value="Anticodon_Ia_Leu_BEm"/>
    <property type="match status" value="1"/>
</dbReference>
<dbReference type="CDD" id="cd00812">
    <property type="entry name" value="LeuRS_core"/>
    <property type="match status" value="1"/>
</dbReference>
<dbReference type="FunFam" id="3.40.50.620:FF:000056">
    <property type="entry name" value="Leucine--tRNA ligase"/>
    <property type="match status" value="1"/>
</dbReference>
<dbReference type="FunFam" id="3.40.50.620:FF:000077">
    <property type="entry name" value="Leucine--tRNA ligase"/>
    <property type="match status" value="1"/>
</dbReference>
<dbReference type="FunFam" id="1.10.730.10:FF:000011">
    <property type="entry name" value="Leucine--tRNA ligase chloroplastic/mitochondrial"/>
    <property type="match status" value="1"/>
</dbReference>
<dbReference type="Gene3D" id="3.10.20.590">
    <property type="match status" value="1"/>
</dbReference>
<dbReference type="Gene3D" id="3.40.50.620">
    <property type="entry name" value="HUPs"/>
    <property type="match status" value="2"/>
</dbReference>
<dbReference type="Gene3D" id="1.10.730.10">
    <property type="entry name" value="Isoleucyl-tRNA Synthetase, Domain 1"/>
    <property type="match status" value="1"/>
</dbReference>
<dbReference type="Gene3D" id="3.90.740.10">
    <property type="entry name" value="Valyl/Leucyl/Isoleucyl-tRNA synthetase, editing domain"/>
    <property type="match status" value="1"/>
</dbReference>
<dbReference type="HAMAP" id="MF_00049_B">
    <property type="entry name" value="Leu_tRNA_synth_B"/>
    <property type="match status" value="1"/>
</dbReference>
<dbReference type="InterPro" id="IPR002300">
    <property type="entry name" value="aa-tRNA-synth_Ia"/>
</dbReference>
<dbReference type="InterPro" id="IPR002302">
    <property type="entry name" value="Leu-tRNA-ligase"/>
</dbReference>
<dbReference type="InterPro" id="IPR025709">
    <property type="entry name" value="Leu_tRNA-synth_edit"/>
</dbReference>
<dbReference type="InterPro" id="IPR013155">
    <property type="entry name" value="M/V/L/I-tRNA-synth_anticd-bd"/>
</dbReference>
<dbReference type="InterPro" id="IPR015413">
    <property type="entry name" value="Methionyl/Leucyl_tRNA_Synth"/>
</dbReference>
<dbReference type="InterPro" id="IPR014729">
    <property type="entry name" value="Rossmann-like_a/b/a_fold"/>
</dbReference>
<dbReference type="InterPro" id="IPR009080">
    <property type="entry name" value="tRNAsynth_Ia_anticodon-bd"/>
</dbReference>
<dbReference type="InterPro" id="IPR009008">
    <property type="entry name" value="Val/Leu/Ile-tRNA-synth_edit"/>
</dbReference>
<dbReference type="NCBIfam" id="TIGR00396">
    <property type="entry name" value="leuS_bact"/>
    <property type="match status" value="1"/>
</dbReference>
<dbReference type="PANTHER" id="PTHR43740:SF2">
    <property type="entry name" value="LEUCINE--TRNA LIGASE, MITOCHONDRIAL"/>
    <property type="match status" value="1"/>
</dbReference>
<dbReference type="PANTHER" id="PTHR43740">
    <property type="entry name" value="LEUCYL-TRNA SYNTHETASE"/>
    <property type="match status" value="1"/>
</dbReference>
<dbReference type="Pfam" id="PF08264">
    <property type="entry name" value="Anticodon_1"/>
    <property type="match status" value="1"/>
</dbReference>
<dbReference type="Pfam" id="PF00133">
    <property type="entry name" value="tRNA-synt_1"/>
    <property type="match status" value="1"/>
</dbReference>
<dbReference type="Pfam" id="PF13603">
    <property type="entry name" value="tRNA-synt_1_2"/>
    <property type="match status" value="1"/>
</dbReference>
<dbReference type="Pfam" id="PF09334">
    <property type="entry name" value="tRNA-synt_1g"/>
    <property type="match status" value="1"/>
</dbReference>
<dbReference type="PRINTS" id="PR00985">
    <property type="entry name" value="TRNASYNTHLEU"/>
</dbReference>
<dbReference type="SUPFAM" id="SSF47323">
    <property type="entry name" value="Anticodon-binding domain of a subclass of class I aminoacyl-tRNA synthetases"/>
    <property type="match status" value="1"/>
</dbReference>
<dbReference type="SUPFAM" id="SSF52374">
    <property type="entry name" value="Nucleotidylyl transferase"/>
    <property type="match status" value="1"/>
</dbReference>
<dbReference type="SUPFAM" id="SSF50677">
    <property type="entry name" value="ValRS/IleRS/LeuRS editing domain"/>
    <property type="match status" value="1"/>
</dbReference>
<feature type="chain" id="PRO_1000074839" description="Leucine--tRNA ligase">
    <location>
        <begin position="1"/>
        <end position="805"/>
    </location>
</feature>
<feature type="short sequence motif" description="'HIGH' region">
    <location>
        <begin position="40"/>
        <end position="51"/>
    </location>
</feature>
<feature type="short sequence motif" description="'KMSKS' region">
    <location>
        <begin position="576"/>
        <end position="580"/>
    </location>
</feature>
<feature type="binding site" evidence="1">
    <location>
        <position position="579"/>
    </location>
    <ligand>
        <name>ATP</name>
        <dbReference type="ChEBI" id="CHEBI:30616"/>
    </ligand>
</feature>
<sequence length="805" mass="91792">MRYDFSKTEKKWQARWKQQETFKTGEAPEKPKYYVLDMFPYPSGSGLHVGHLEGYTASDISARYRRSRGYNVLHPMGWDAFGLPAEQFAIKTGTHPSDTTQKNIANFKETLQAMGFSYDWSREINTTDPGYFQWTQWIFLKLHEMGLAYMSEVDVNWCVELRAVLANEEVEEKLADGLTVVRRPLRQWVLKITAYADRLLEDLDGLDWPENVKQMQRNWIGRSEGVEVDFELRCHRTMLRVYTTRPDTLFGATYLVISPEHAMAEKLATAQQLVAVKEYIAKAKLKTELERTGLQKDKTGVFTGSYAINPATGEPLPVWISDFVLTSYGTGAIMSVPAHDSRDWEFAKQYGLPIIEVVKSPHDVQQEVFEGKDSTVVNSSNNDISLNGLAFPEAFELMASWLEKKKAGKRKVNYRLRDWIFSRQRYWGEPIPIKHYPDGTLKPETSLPLMLPEVEAYQPTETGESPLANIPEWLNGTDENGPFRRETNTMPQWAGSCWYYLRFIDPHNSKLPVDPAKEAYWMNVDLYIGGAEHAVLHLLYARFWHKVLFDLKVVSTKEPFQRLFNQGMILGEDNEKMSKSRGNVIPADHVLQTYGADAVRLYEMFLGPLEQVKPWNTNGIEGISRFLSRVWRLVWPEPEGTRADLSTLAPSPDLLRRMHKTIKKVAADTENLKFNTAIAEMMVFTNELHRTGEGSRIAVETLLLLLAPYAPHLSEELWEALGHQESISLAPFPEFDPELAQDKEVTIAVQVNGKLRGSFTAAPGSPKEQLLNEAKALEGVKKFLEGVTIMKEIVVPDKLINFAVK</sequence>